<name>TD60_TRIDM</name>
<proteinExistence type="evidence at transcript level"/>
<comment type="function">
    <text evidence="4">Inhibits the intrinsic blood coagulation pathway by blocking the activation of host coagulation factor XII (F12) but not the enzymatic activity of activated F12.</text>
</comment>
<comment type="subcellular location">
    <subcellularLocation>
        <location evidence="6">Secreted</location>
    </subcellularLocation>
</comment>
<comment type="tissue specificity">
    <text evidence="3">Salivary gland.</text>
</comment>
<comment type="similarity">
    <text evidence="6">Belongs to the calycin superfamily. Triabin family.</text>
</comment>
<feature type="signal peptide" evidence="1">
    <location>
        <begin position="1"/>
        <end position="21"/>
    </location>
</feature>
<feature type="chain" id="PRO_5003024732" description="Dimiconin" evidence="1">
    <location>
        <begin position="22"/>
        <end position="196"/>
    </location>
</feature>
<feature type="glycosylation site" description="N-linked (GlcNAc...) asparagine" evidence="2">
    <location>
        <position position="62"/>
    </location>
</feature>
<feature type="glycosylation site" description="N-linked (GlcNAc...) asparagine" evidence="2">
    <location>
        <position position="187"/>
    </location>
</feature>
<evidence type="ECO:0000255" key="1"/>
<evidence type="ECO:0000255" key="2">
    <source>
        <dbReference type="PROSITE-ProRule" id="PRU00498"/>
    </source>
</evidence>
<evidence type="ECO:0000269" key="3">
    <source>
    </source>
</evidence>
<evidence type="ECO:0000269" key="4">
    <source>
    </source>
</evidence>
<evidence type="ECO:0000303" key="5">
    <source>
    </source>
</evidence>
<evidence type="ECO:0000305" key="6"/>
<evidence type="ECO:0000312" key="7">
    <source>
        <dbReference type="EMBL" id="BAI50848.1"/>
    </source>
</evidence>
<dbReference type="EMBL" id="AB470398">
    <property type="protein sequence ID" value="BAI50848.1"/>
    <property type="molecule type" value="mRNA"/>
</dbReference>
<dbReference type="MEROPS" id="I59.001"/>
<dbReference type="GO" id="GO:0005576">
    <property type="term" value="C:extracellular region"/>
    <property type="evidence" value="ECO:0007669"/>
    <property type="project" value="UniProtKB-SubCell"/>
</dbReference>
<dbReference type="GO" id="GO:0090729">
    <property type="term" value="F:toxin activity"/>
    <property type="evidence" value="ECO:0007669"/>
    <property type="project" value="UniProtKB-KW"/>
</dbReference>
<dbReference type="GO" id="GO:0035899">
    <property type="term" value="P:suppression of blood coagulation in another organism"/>
    <property type="evidence" value="ECO:0000314"/>
    <property type="project" value="UniProtKB"/>
</dbReference>
<dbReference type="GO" id="GO:0030682">
    <property type="term" value="P:symbiont-mediated perturbation of host defenses"/>
    <property type="evidence" value="ECO:0007669"/>
    <property type="project" value="InterPro"/>
</dbReference>
<dbReference type="CDD" id="cd19423">
    <property type="entry name" value="lipocalin_LTBP1-like"/>
    <property type="match status" value="1"/>
</dbReference>
<dbReference type="Gene3D" id="2.40.128.20">
    <property type="match status" value="1"/>
</dbReference>
<dbReference type="InterPro" id="IPR012674">
    <property type="entry name" value="Calycin"/>
</dbReference>
<dbReference type="InterPro" id="IPR005657">
    <property type="entry name" value="Triabi/Procalin"/>
</dbReference>
<dbReference type="Pfam" id="PF03973">
    <property type="entry name" value="Triabin"/>
    <property type="match status" value="1"/>
</dbReference>
<dbReference type="SUPFAM" id="SSF50814">
    <property type="entry name" value="Lipocalins"/>
    <property type="match status" value="1"/>
</dbReference>
<reference evidence="7" key="1">
    <citation type="journal article" date="2010" name="Infect. Genet. Evol.">
        <title>A repertoire of the dominant transcripts from the salivary glands of the blood-sucking bug, Triatoma dimidiata, a vector of Chagas disease.</title>
        <authorList>
            <person name="Kato H."/>
            <person name="Jochim R.C."/>
            <person name="Gomez E.A."/>
            <person name="Sakoda R."/>
            <person name="Iwata H."/>
            <person name="Valenzuela J.G."/>
            <person name="Hashiguchi Y."/>
        </authorList>
    </citation>
    <scope>NUCLEOTIDE SEQUENCE [LARGE SCALE MRNA]</scope>
    <scope>TISSUE SPECIFICITY</scope>
    <source>
        <tissue evidence="7">Salivary gland</tissue>
    </source>
</reference>
<reference evidence="6" key="2">
    <citation type="journal article" date="2012" name="J. Exp. Biol.">
        <title>Dimiconin, a novel coagulation inhibitor from the kissing bug, Triatoma dimidiata, a vector of Chagas disease.</title>
        <authorList>
            <person name="Ishimaru Y."/>
            <person name="Gomez E.A."/>
            <person name="Zhang F."/>
            <person name="Martini-Robles L."/>
            <person name="Iwata H."/>
            <person name="Sakurai T."/>
            <person name="Katakura K."/>
            <person name="Hashiguchi Y."/>
            <person name="Kato H."/>
        </authorList>
    </citation>
    <scope>FUNCTION</scope>
</reference>
<organism evidence="7">
    <name type="scientific">Triatoma dimidiata</name>
    <name type="common">Kissing bug</name>
    <name type="synonym">Meccus dimidiatus</name>
    <dbReference type="NCBI Taxonomy" id="72491"/>
    <lineage>
        <taxon>Eukaryota</taxon>
        <taxon>Metazoa</taxon>
        <taxon>Ecdysozoa</taxon>
        <taxon>Arthropoda</taxon>
        <taxon>Hexapoda</taxon>
        <taxon>Insecta</taxon>
        <taxon>Pterygota</taxon>
        <taxon>Neoptera</taxon>
        <taxon>Paraneoptera</taxon>
        <taxon>Hemiptera</taxon>
        <taxon>Heteroptera</taxon>
        <taxon>Panheteroptera</taxon>
        <taxon>Cimicomorpha</taxon>
        <taxon>Reduviidae</taxon>
        <taxon>Triatominae</taxon>
        <taxon>Triatoma</taxon>
    </lineage>
</organism>
<protein>
    <recommendedName>
        <fullName evidence="5">Dimiconin</fullName>
    </recommendedName>
    <alternativeName>
        <fullName evidence="5">Triabin-like protein Td60</fullName>
        <shortName evidence="5">Td60</shortName>
    </alternativeName>
</protein>
<sequence length="196" mass="22578">MKTIIVVTIFGILTCAYPTDGEHCAQEKAMEDFDPSRFFNGKWYVVHYGKTGPTVCQKFSTNGTQGAPTQIVETGYDKFEDYLKFQCDETGKKNDYHYSFKCKSYECGSDNIEFEVDFTVLSASYDDFALVCRTITFTSGTKDKDDEVLVLEREKTLDVIDNCRRTYYLTEFEKMSLSSQFLSKKENITMLSFQLK</sequence>
<keyword id="KW-1203">Blood coagulation cascade inhibiting toxin</keyword>
<keyword id="KW-0325">Glycoprotein</keyword>
<keyword id="KW-1199">Hemostasis impairing toxin</keyword>
<keyword id="KW-0964">Secreted</keyword>
<keyword id="KW-0732">Signal</keyword>
<keyword id="KW-0800">Toxin</keyword>
<accession>D1MWE7</accession>